<protein>
    <recommendedName>
        <fullName>Plasma membrane calcium-transporting ATPase 3</fullName>
        <shortName>PMCA3</shortName>
        <ecNumber evidence="13 14">7.2.2.10</ecNumber>
    </recommendedName>
    <alternativeName>
        <fullName>Plasma membrane calcium ATPase isoform 3</fullName>
    </alternativeName>
    <alternativeName>
        <fullName>Plasma membrane calcium pump isoform 3</fullName>
    </alternativeName>
</protein>
<gene>
    <name type="primary">Atp2b3</name>
    <name type="synonym">Pmca3</name>
</gene>
<dbReference type="EC" id="7.2.2.10" evidence="13 14"/>
<dbReference type="EMBL" id="L05565">
    <property type="protein sequence ID" value="AAA53650.1"/>
    <property type="molecule type" value="Genomic_DNA"/>
</dbReference>
<dbReference type="EMBL" id="L05558">
    <property type="protein sequence ID" value="AAA53650.1"/>
    <property type="status" value="JOINED"/>
    <property type="molecule type" value="Genomic_DNA"/>
</dbReference>
<dbReference type="EMBL" id="L05564">
    <property type="protein sequence ID" value="AAA53650.1"/>
    <property type="status" value="JOINED"/>
    <property type="molecule type" value="Genomic_DNA"/>
</dbReference>
<dbReference type="EMBL" id="J05087">
    <property type="protein sequence ID" value="AAA69667.1"/>
    <property type="molecule type" value="mRNA"/>
</dbReference>
<dbReference type="EMBL" id="M96626">
    <property type="protein sequence ID" value="AAA50821.1"/>
    <property type="molecule type" value="mRNA"/>
</dbReference>
<dbReference type="PIR" id="A34308">
    <property type="entry name" value="A34308"/>
</dbReference>
<dbReference type="PIR" id="C44525">
    <property type="entry name" value="C44525"/>
</dbReference>
<dbReference type="RefSeq" id="NP_579822.1">
    <molecule id="Q64568-3"/>
    <property type="nucleotide sequence ID" value="NM_133288.3"/>
</dbReference>
<dbReference type="RefSeq" id="XP_008771842.1">
    <molecule id="Q64568-7"/>
    <property type="nucleotide sequence ID" value="XM_008773620.4"/>
</dbReference>
<dbReference type="RefSeq" id="XP_017457435.1">
    <property type="nucleotide sequence ID" value="XM_017601946.1"/>
</dbReference>
<dbReference type="RefSeq" id="XP_017457436.1">
    <property type="nucleotide sequence ID" value="XM_017601947.1"/>
</dbReference>
<dbReference type="RefSeq" id="XP_017457437.1">
    <property type="nucleotide sequence ID" value="XM_017601948.1"/>
</dbReference>
<dbReference type="RefSeq" id="XP_063135925.1">
    <molecule id="Q64568-5"/>
    <property type="nucleotide sequence ID" value="XM_063279855.1"/>
</dbReference>
<dbReference type="RefSeq" id="XP_063135929.1">
    <molecule id="Q64568-3"/>
    <property type="nucleotide sequence ID" value="XM_063279859.1"/>
</dbReference>
<dbReference type="SMR" id="Q64568"/>
<dbReference type="BioGRID" id="248231">
    <property type="interactions" value="2"/>
</dbReference>
<dbReference type="FunCoup" id="Q64568">
    <property type="interactions" value="588"/>
</dbReference>
<dbReference type="IntAct" id="Q64568">
    <property type="interactions" value="1"/>
</dbReference>
<dbReference type="MINT" id="Q64568"/>
<dbReference type="STRING" id="10116.ENSRNOP00000075088"/>
<dbReference type="iPTMnet" id="Q64568"/>
<dbReference type="PhosphoSitePlus" id="Q64568"/>
<dbReference type="SwissPalm" id="Q64568"/>
<dbReference type="jPOST" id="Q64568"/>
<dbReference type="PaxDb" id="10116-ENSRNOP00000035695"/>
<dbReference type="Ensembl" id="ENSRNOT00000098998.1">
    <molecule id="Q64568-7"/>
    <property type="protein sequence ID" value="ENSRNOP00000083651.1"/>
    <property type="gene ID" value="ENSRNOG00000061304.2"/>
</dbReference>
<dbReference type="GeneID" id="29599"/>
<dbReference type="KEGG" id="rno:29599"/>
<dbReference type="AGR" id="RGD:621304"/>
<dbReference type="CTD" id="492"/>
<dbReference type="RGD" id="621304">
    <property type="gene designation" value="Atp2b3"/>
</dbReference>
<dbReference type="VEuPathDB" id="HostDB:ENSRNOG00000061304"/>
<dbReference type="eggNOG" id="KOG0204">
    <property type="taxonomic scope" value="Eukaryota"/>
</dbReference>
<dbReference type="GeneTree" id="ENSGT00940000160765"/>
<dbReference type="InParanoid" id="Q64568"/>
<dbReference type="OrthoDB" id="6503417at2759"/>
<dbReference type="PhylomeDB" id="Q64568"/>
<dbReference type="Reactome" id="R-RNO-418359">
    <property type="pathway name" value="Reduction of cytosolic Ca++ levels"/>
</dbReference>
<dbReference type="Reactome" id="R-RNO-5578775">
    <property type="pathway name" value="Ion homeostasis"/>
</dbReference>
<dbReference type="Reactome" id="R-RNO-936837">
    <property type="pathway name" value="Ion transport by P-type ATPases"/>
</dbReference>
<dbReference type="PRO" id="PR:Q64568"/>
<dbReference type="Proteomes" id="UP000002494">
    <property type="component" value="Chromosome X"/>
</dbReference>
<dbReference type="Bgee" id="ENSRNOG00000061304">
    <property type="expression patterns" value="Expressed in cerebellum and 12 other cell types or tissues"/>
</dbReference>
<dbReference type="ExpressionAtlas" id="Q64568">
    <property type="expression patterns" value="baseline and differential"/>
</dbReference>
<dbReference type="GO" id="GO:0098982">
    <property type="term" value="C:GABA-ergic synapse"/>
    <property type="evidence" value="ECO:0000266"/>
    <property type="project" value="RGD"/>
</dbReference>
<dbReference type="GO" id="GO:0098978">
    <property type="term" value="C:glutamatergic synapse"/>
    <property type="evidence" value="ECO:0000314"/>
    <property type="project" value="SynGO"/>
</dbReference>
<dbReference type="GO" id="GO:0043231">
    <property type="term" value="C:intracellular membrane-bounded organelle"/>
    <property type="evidence" value="ECO:0000318"/>
    <property type="project" value="GO_Central"/>
</dbReference>
<dbReference type="GO" id="GO:1990032">
    <property type="term" value="C:parallel fiber"/>
    <property type="evidence" value="ECO:0000314"/>
    <property type="project" value="UniProtKB"/>
</dbReference>
<dbReference type="GO" id="GO:0098688">
    <property type="term" value="C:parallel fiber to Purkinje cell synapse"/>
    <property type="evidence" value="ECO:0000314"/>
    <property type="project" value="UniProtKB"/>
</dbReference>
<dbReference type="GO" id="GO:0005886">
    <property type="term" value="C:plasma membrane"/>
    <property type="evidence" value="ECO:0000266"/>
    <property type="project" value="RGD"/>
</dbReference>
<dbReference type="GO" id="GO:0042734">
    <property type="term" value="C:presynaptic membrane"/>
    <property type="evidence" value="ECO:0000314"/>
    <property type="project" value="UniProtKB"/>
</dbReference>
<dbReference type="GO" id="GO:0005524">
    <property type="term" value="F:ATP binding"/>
    <property type="evidence" value="ECO:0007669"/>
    <property type="project" value="UniProtKB-KW"/>
</dbReference>
<dbReference type="GO" id="GO:0016887">
    <property type="term" value="F:ATP hydrolysis activity"/>
    <property type="evidence" value="ECO:0007669"/>
    <property type="project" value="InterPro"/>
</dbReference>
<dbReference type="GO" id="GO:0015085">
    <property type="term" value="F:calcium ion transmembrane transporter activity"/>
    <property type="evidence" value="ECO:0000266"/>
    <property type="project" value="RGD"/>
</dbReference>
<dbReference type="GO" id="GO:0005516">
    <property type="term" value="F:calmodulin binding"/>
    <property type="evidence" value="ECO:0007669"/>
    <property type="project" value="UniProtKB-KW"/>
</dbReference>
<dbReference type="GO" id="GO:0046872">
    <property type="term" value="F:metal ion binding"/>
    <property type="evidence" value="ECO:0007669"/>
    <property type="project" value="UniProtKB-KW"/>
</dbReference>
<dbReference type="GO" id="GO:0005388">
    <property type="term" value="F:P-type calcium transporter activity"/>
    <property type="evidence" value="ECO:0000318"/>
    <property type="project" value="GO_Central"/>
</dbReference>
<dbReference type="GO" id="GO:1905056">
    <property type="term" value="F:P-type calcium transporter activity involved in regulation of presynaptic cytosolic calcium ion concentration"/>
    <property type="evidence" value="ECO:0000266"/>
    <property type="project" value="RGD"/>
</dbReference>
<dbReference type="GO" id="GO:0030165">
    <property type="term" value="F:PDZ domain binding"/>
    <property type="evidence" value="ECO:0000353"/>
    <property type="project" value="RGD"/>
</dbReference>
<dbReference type="GO" id="GO:1990034">
    <property type="term" value="P:calcium ion export across plasma membrane"/>
    <property type="evidence" value="ECO:0000250"/>
    <property type="project" value="UniProtKB"/>
</dbReference>
<dbReference type="GO" id="GO:0003407">
    <property type="term" value="P:neural retina development"/>
    <property type="evidence" value="ECO:0000270"/>
    <property type="project" value="RGD"/>
</dbReference>
<dbReference type="GO" id="GO:0051480">
    <property type="term" value="P:regulation of cytosolic calcium ion concentration"/>
    <property type="evidence" value="ECO:0000266"/>
    <property type="project" value="RGD"/>
</dbReference>
<dbReference type="CDD" id="cd02081">
    <property type="entry name" value="P-type_ATPase_Ca_PMCA-like"/>
    <property type="match status" value="1"/>
</dbReference>
<dbReference type="FunFam" id="1.20.1110.10:FF:000001">
    <property type="entry name" value="Calcium-transporting ATPase"/>
    <property type="match status" value="1"/>
</dbReference>
<dbReference type="FunFam" id="1.20.1110.10:FF:000002">
    <property type="entry name" value="Calcium-transporting ATPase"/>
    <property type="match status" value="1"/>
</dbReference>
<dbReference type="FunFam" id="1.20.1110.10:FF:000008">
    <property type="entry name" value="Calcium-transporting ATPase"/>
    <property type="match status" value="1"/>
</dbReference>
<dbReference type="FunFam" id="2.70.150.10:FF:000001">
    <property type="entry name" value="Calcium-transporting ATPase"/>
    <property type="match status" value="1"/>
</dbReference>
<dbReference type="FunFam" id="3.40.1110.10:FF:000032">
    <property type="entry name" value="Calcium-transporting ATPase"/>
    <property type="match status" value="1"/>
</dbReference>
<dbReference type="FunFam" id="3.40.50.1000:FF:000007">
    <property type="entry name" value="Calcium-transporting ATPase"/>
    <property type="match status" value="1"/>
</dbReference>
<dbReference type="Gene3D" id="3.40.1110.10">
    <property type="entry name" value="Calcium-transporting ATPase, cytoplasmic domain N"/>
    <property type="match status" value="1"/>
</dbReference>
<dbReference type="Gene3D" id="2.70.150.10">
    <property type="entry name" value="Calcium-transporting ATPase, cytoplasmic transduction domain A"/>
    <property type="match status" value="1"/>
</dbReference>
<dbReference type="Gene3D" id="1.20.1110.10">
    <property type="entry name" value="Calcium-transporting ATPase, transmembrane domain"/>
    <property type="match status" value="2"/>
</dbReference>
<dbReference type="Gene3D" id="3.40.50.1000">
    <property type="entry name" value="HAD superfamily/HAD-like"/>
    <property type="match status" value="1"/>
</dbReference>
<dbReference type="InterPro" id="IPR022141">
    <property type="entry name" value="ATP_Ca_trans_C"/>
</dbReference>
<dbReference type="InterPro" id="IPR006068">
    <property type="entry name" value="ATPase_P-typ_cation-transptr_C"/>
</dbReference>
<dbReference type="InterPro" id="IPR004014">
    <property type="entry name" value="ATPase_P-typ_cation-transptr_N"/>
</dbReference>
<dbReference type="InterPro" id="IPR023299">
    <property type="entry name" value="ATPase_P-typ_cyto_dom_N"/>
</dbReference>
<dbReference type="InterPro" id="IPR018303">
    <property type="entry name" value="ATPase_P-typ_P_site"/>
</dbReference>
<dbReference type="InterPro" id="IPR023298">
    <property type="entry name" value="ATPase_P-typ_TM_dom_sf"/>
</dbReference>
<dbReference type="InterPro" id="IPR008250">
    <property type="entry name" value="ATPase_P-typ_transduc_dom_A_sf"/>
</dbReference>
<dbReference type="InterPro" id="IPR036412">
    <property type="entry name" value="HAD-like_sf"/>
</dbReference>
<dbReference type="InterPro" id="IPR023214">
    <property type="entry name" value="HAD_sf"/>
</dbReference>
<dbReference type="InterPro" id="IPR006408">
    <property type="entry name" value="P-type_ATPase_IIB"/>
</dbReference>
<dbReference type="InterPro" id="IPR001757">
    <property type="entry name" value="P_typ_ATPase"/>
</dbReference>
<dbReference type="InterPro" id="IPR044492">
    <property type="entry name" value="P_typ_ATPase_HD_dom"/>
</dbReference>
<dbReference type="NCBIfam" id="TIGR01517">
    <property type="entry name" value="ATPase-IIB_Ca"/>
    <property type="match status" value="1"/>
</dbReference>
<dbReference type="NCBIfam" id="TIGR01494">
    <property type="entry name" value="ATPase_P-type"/>
    <property type="match status" value="3"/>
</dbReference>
<dbReference type="PANTHER" id="PTHR24093">
    <property type="entry name" value="CATION TRANSPORTING ATPASE"/>
    <property type="match status" value="1"/>
</dbReference>
<dbReference type="PANTHER" id="PTHR24093:SF284">
    <property type="entry name" value="PLASMA MEMBRANE CALCIUM-TRANSPORTING ATPASE 3"/>
    <property type="match status" value="1"/>
</dbReference>
<dbReference type="Pfam" id="PF12424">
    <property type="entry name" value="ATP_Ca_trans_C"/>
    <property type="match status" value="2"/>
</dbReference>
<dbReference type="Pfam" id="PF13246">
    <property type="entry name" value="Cation_ATPase"/>
    <property type="match status" value="1"/>
</dbReference>
<dbReference type="Pfam" id="PF00689">
    <property type="entry name" value="Cation_ATPase_C"/>
    <property type="match status" value="1"/>
</dbReference>
<dbReference type="Pfam" id="PF00690">
    <property type="entry name" value="Cation_ATPase_N"/>
    <property type="match status" value="1"/>
</dbReference>
<dbReference type="Pfam" id="PF00122">
    <property type="entry name" value="E1-E2_ATPase"/>
    <property type="match status" value="2"/>
</dbReference>
<dbReference type="Pfam" id="PF00702">
    <property type="entry name" value="Hydrolase"/>
    <property type="match status" value="1"/>
</dbReference>
<dbReference type="PRINTS" id="PR00119">
    <property type="entry name" value="CATATPASE"/>
</dbReference>
<dbReference type="SFLD" id="SFLDG00002">
    <property type="entry name" value="C1.7:_P-type_atpase_like"/>
    <property type="match status" value="1"/>
</dbReference>
<dbReference type="SFLD" id="SFLDF00027">
    <property type="entry name" value="p-type_atpase"/>
    <property type="match status" value="1"/>
</dbReference>
<dbReference type="SMART" id="SM00831">
    <property type="entry name" value="Cation_ATPase_N"/>
    <property type="match status" value="1"/>
</dbReference>
<dbReference type="SUPFAM" id="SSF81653">
    <property type="entry name" value="Calcium ATPase, transduction domain A"/>
    <property type="match status" value="1"/>
</dbReference>
<dbReference type="SUPFAM" id="SSF81665">
    <property type="entry name" value="Calcium ATPase, transmembrane domain M"/>
    <property type="match status" value="1"/>
</dbReference>
<dbReference type="SUPFAM" id="SSF56784">
    <property type="entry name" value="HAD-like"/>
    <property type="match status" value="1"/>
</dbReference>
<dbReference type="SUPFAM" id="SSF81660">
    <property type="entry name" value="Metal cation-transporting ATPase, ATP-binding domain N"/>
    <property type="match status" value="1"/>
</dbReference>
<dbReference type="PROSITE" id="PS00154">
    <property type="entry name" value="ATPASE_E1_E2"/>
    <property type="match status" value="1"/>
</dbReference>
<feature type="chain" id="PRO_0000046219" description="Plasma membrane calcium-transporting ATPase 3">
    <location>
        <begin position="1"/>
        <end position="1258"/>
    </location>
</feature>
<feature type="topological domain" description="Cytoplasmic" evidence="3">
    <location>
        <begin position="1"/>
        <end position="97"/>
    </location>
</feature>
<feature type="transmembrane region" description="Helical" evidence="3">
    <location>
        <begin position="98"/>
        <end position="118"/>
    </location>
</feature>
<feature type="topological domain" description="Extracellular" evidence="3">
    <location>
        <begin position="119"/>
        <end position="155"/>
    </location>
</feature>
<feature type="transmembrane region" description="Helical" evidence="3">
    <location>
        <begin position="156"/>
        <end position="176"/>
    </location>
</feature>
<feature type="topological domain" description="Cytoplasmic" evidence="3">
    <location>
        <begin position="177"/>
        <end position="364"/>
    </location>
</feature>
<feature type="transmembrane region" description="Helical" evidence="3">
    <location>
        <begin position="365"/>
        <end position="384"/>
    </location>
</feature>
<feature type="topological domain" description="Extracellular" evidence="3">
    <location>
        <begin position="385"/>
        <end position="417"/>
    </location>
</feature>
<feature type="transmembrane region" description="Helical" evidence="3">
    <location>
        <begin position="418"/>
        <end position="435"/>
    </location>
</feature>
<feature type="topological domain" description="Cytoplasmic" evidence="3">
    <location>
        <begin position="436"/>
        <end position="849"/>
    </location>
</feature>
<feature type="transmembrane region" description="Helical" evidence="3">
    <location>
        <begin position="850"/>
        <end position="869"/>
    </location>
</feature>
<feature type="topological domain" description="Extracellular" evidence="3">
    <location>
        <begin position="870"/>
        <end position="879"/>
    </location>
</feature>
<feature type="transmembrane region" description="Helical" evidence="3">
    <location>
        <begin position="880"/>
        <end position="900"/>
    </location>
</feature>
<feature type="topological domain" description="Cytoplasmic" evidence="3">
    <location>
        <begin position="901"/>
        <end position="920"/>
    </location>
</feature>
<feature type="transmembrane region" description="Helical" evidence="3">
    <location>
        <begin position="921"/>
        <end position="943"/>
    </location>
</feature>
<feature type="topological domain" description="Extracellular" evidence="3">
    <location>
        <begin position="944"/>
        <end position="961"/>
    </location>
</feature>
<feature type="transmembrane region" description="Helical" evidence="3">
    <location>
        <begin position="962"/>
        <end position="983"/>
    </location>
</feature>
<feature type="topological domain" description="Cytoplasmic" evidence="3">
    <location>
        <begin position="984"/>
        <end position="1002"/>
    </location>
</feature>
<feature type="transmembrane region" description="Helical" evidence="3">
    <location>
        <begin position="1003"/>
        <end position="1024"/>
    </location>
</feature>
<feature type="topological domain" description="Extracellular" evidence="3">
    <location>
        <begin position="1025"/>
        <end position="1034"/>
    </location>
</feature>
<feature type="transmembrane region" description="Helical" evidence="3">
    <location>
        <begin position="1035"/>
        <end position="1056"/>
    </location>
</feature>
<feature type="topological domain" description="Cytoplasmic" evidence="3">
    <location>
        <begin position="1057"/>
        <end position="1258"/>
    </location>
</feature>
<feature type="region of interest" description="Disordered" evidence="4">
    <location>
        <begin position="1"/>
        <end position="22"/>
    </location>
</feature>
<feature type="region of interest" description="Disordered" evidence="4">
    <location>
        <begin position="298"/>
        <end position="328"/>
    </location>
</feature>
<feature type="region of interest" description="Disordered" evidence="4">
    <location>
        <begin position="335"/>
        <end position="354"/>
    </location>
</feature>
<feature type="region of interest" description="Calmodulin-binding subdomain A" evidence="1">
    <location>
        <begin position="1097"/>
        <end position="1114"/>
    </location>
</feature>
<feature type="region of interest" description="Calmodulin-binding subdomain B" evidence="1">
    <location>
        <begin position="1115"/>
        <end position="1124"/>
    </location>
</feature>
<feature type="region of interest" description="Disordered" evidence="4">
    <location>
        <begin position="1204"/>
        <end position="1258"/>
    </location>
</feature>
<feature type="compositionally biased region" description="Polar residues" evidence="4">
    <location>
        <begin position="1"/>
        <end position="19"/>
    </location>
</feature>
<feature type="compositionally biased region" description="Basic and acidic residues" evidence="4">
    <location>
        <begin position="299"/>
        <end position="308"/>
    </location>
</feature>
<feature type="compositionally biased region" description="Basic and acidic residues" evidence="4">
    <location>
        <begin position="342"/>
        <end position="354"/>
    </location>
</feature>
<feature type="compositionally biased region" description="Low complexity" evidence="4">
    <location>
        <begin position="1231"/>
        <end position="1245"/>
    </location>
</feature>
<feature type="active site" description="4-aspartylphosphate intermediate" evidence="1">
    <location>
        <position position="473"/>
    </location>
</feature>
<feature type="binding site" evidence="1">
    <location>
        <position position="794"/>
    </location>
    <ligand>
        <name>Mg(2+)</name>
        <dbReference type="ChEBI" id="CHEBI:18420"/>
    </ligand>
</feature>
<feature type="binding site" evidence="1">
    <location>
        <position position="798"/>
    </location>
    <ligand>
        <name>Mg(2+)</name>
        <dbReference type="ChEBI" id="CHEBI:18420"/>
    </ligand>
</feature>
<feature type="modified residue" description="Phosphoserine" evidence="15">
    <location>
        <position position="8"/>
    </location>
</feature>
<feature type="modified residue" description="Phosphothreonine" evidence="15">
    <location>
        <position position="1079"/>
    </location>
</feature>
<feature type="modified residue" description="Phosphothreonine; by PKC" evidence="1">
    <location>
        <position position="1113"/>
    </location>
</feature>
<feature type="modified residue" description="Phosphoserine" evidence="15">
    <location>
        <position position="1126"/>
    </location>
</feature>
<feature type="splice variant" id="VSP_000396" description="In isoform ZA, isoform ZB, isoform ZC, isoform ZD, isoform ZE and isoform ZF." evidence="11">
    <location>
        <begin position="306"/>
        <end position="319"/>
    </location>
</feature>
<feature type="splice variant" id="VSP_000398" description="In isoform XF and isoform ZF." evidence="12">
    <original>MEVVSTFKRSGSFQGAVRRRSSVLSQLHDVTNLSTPTHIRVVKAFRSSLYEGLEKPESKSCIHNFMATPEFLINDYTHNIPLIDDTDVDENEERLRAPPPPPPNQNNNAIDSGIYLTTHATKSATSSAFSSRPGSPLHSMETSL</original>
    <variation>VCWDGKKMLRTTEVG</variation>
    <location>
        <begin position="1115"/>
        <end position="1258"/>
    </location>
</feature>
<feature type="splice variant" id="VSP_000397" description="In isoform XB and isoform ZB." evidence="12">
    <location>
        <begin position="1115"/>
        <end position="1152"/>
    </location>
</feature>
<feature type="splice variant" id="VSP_000399" description="In isoform XC and isoform ZC." evidence="12">
    <location>
        <begin position="1144"/>
        <end position="1152"/>
    </location>
</feature>
<feature type="splice variant" id="VSP_000400" description="In isoform XA and isoform ZA." evidence="11">
    <original>IRVVKAFRSSLYEGLEKPESKSCIHNFMATPEFLINDYTHNIPLIDDTDVDENEERLRAPPPPPPNQNNNAIDSGIYLTTHATKSATSSAFSSRPGSPLHSMETSL</original>
    <variation>VTLSAAKPTSAAGNPSGESIP</variation>
    <location>
        <begin position="1153"/>
        <end position="1258"/>
    </location>
</feature>
<feature type="splice variant" id="VSP_000401" description="In isoform XE and isoform ZE." evidence="12">
    <original>IRVVKAFRSSLYEGLEKPESKSCIHNFMATPEFLINDYTHNIPLIDDTDVDENEERLRAPPPPPPNQNNNAIDSGIYLTTHATKSATSSAFSSRPGSPLHSMETSL</original>
    <variation>VTLSAAKPTSAAGSES</variation>
    <location>
        <begin position="1153"/>
        <end position="1258"/>
    </location>
</feature>
<sequence length="1258" mass="138559">MGDMANSSIEFHPKPQQQREVPHVGGFGCTLAELRSLMELRGAEALQKIQEAYGDVSGLCRRLKTSPTEGLADNTNDLEKRRQIYGQNFIPPKQPKTFLQLVWEALQDVTLIILEVAAIVSLGLSFYAPPGEESEACGNVSGGAEDEGEAEAGWIEGAAILLSVICVVLVTAFNDWSKEKQFRGLQSRIEQEQKFTVIRNGQLLQVPVAALVVGDIAQVKYGDLLPADGVLIQGNDLKIDESSLTGESDHVRKSADKDPMLLSGTHVMEGSGRMVVTAVGVNSQTGIIFTLLGAGGEEEEKKDKKGKQQDGAMESSQTKAKKQDGAVAMEMQPLKSAEGGEMEEREKKKANVPKKEKSVLQGKLTKLAVQIGKAGLVMSAITVIILVLYFVIETFVVDGRVWLAECTPVYVQYFVKFFIIGVTVLVVAVPEGLPLAVTISLAYSVKKMMKDNNLVRHLDACETMGNATAICSDKTGTLTTNRMTVVQSYLGDTHYKEIPAPSALTPKILDLLVHAISINSAYTTKILPPEKEGALPRQVGNKTECALLGFILDLKRDFQPVREQIPEDQLYKVYTFNSVRKSMSTVIRMPDGGFRLFSKGASEILLKKCTNILNSNGELRGFRPRDRDDMVKKIIEPMACDGLRTICIAYRDFSAIQEPDWDNENEVVGDLTCIAVVGIEDPVRPEVPEAIRKCQRAGITVRMVTGDNINTARAIAAKCGIIQPGEDFLCLEGKEFNRRIRNEKGEIEQERLDKVWPKLRVLARSSPTDKHTLVKGIIDSTTGEQRQVVAVTGDGTNDGPALKKADVGFAMGIAGTDVAKEASDIILTDDNFTSIVKAVMWGRNVYDSISKFLQFQLTVNVVAVIVAFTGACITQDSPLKAVQMLWVNLIMDTFASLALATEPPTESLLLRKPYGRDKPLISRTMMKNILGHAVYQLTIIFTLLFVGELFFDIDSGRNAPLHSPPSEHYTIIFNTFVMMQLFNEINARKIHGERNVFDGIFSNPIFCTIVLGTFGIQIVIVQFGGKPFSCSPLSTEQWLWCLFVGVGELVWGQVIATIPTSQLKCLKEAGHGPGKDEMTDEELAEGEEEIDHAERELRRGQILWFRGLNRIQTQMEVVSTFKRSGSFQGAVRRRSSVLSQLHDVTNLSTPTHIRVVKAFRSSLYEGLEKPESKSCIHNFMATPEFLINDYTHNIPLIDDTDVDENEERLRAPPPPPPNQNNNAIDSGIYLTTHATKSATSSAFSSRPGSPLHSMETSL</sequence>
<keyword id="KW-0025">Alternative splicing</keyword>
<keyword id="KW-0067">ATP-binding</keyword>
<keyword id="KW-0106">Calcium</keyword>
<keyword id="KW-0109">Calcium transport</keyword>
<keyword id="KW-0112">Calmodulin-binding</keyword>
<keyword id="KW-1003">Cell membrane</keyword>
<keyword id="KW-0966">Cell projection</keyword>
<keyword id="KW-0406">Ion transport</keyword>
<keyword id="KW-0460">Magnesium</keyword>
<keyword id="KW-0472">Membrane</keyword>
<keyword id="KW-0479">Metal-binding</keyword>
<keyword id="KW-0547">Nucleotide-binding</keyword>
<keyword id="KW-0597">Phosphoprotein</keyword>
<keyword id="KW-1185">Reference proteome</keyword>
<keyword id="KW-0770">Synapse</keyword>
<keyword id="KW-1278">Translocase</keyword>
<keyword id="KW-0812">Transmembrane</keyword>
<keyword id="KW-1133">Transmembrane helix</keyword>
<keyword id="KW-0813">Transport</keyword>
<organism>
    <name type="scientific">Rattus norvegicus</name>
    <name type="common">Rat</name>
    <dbReference type="NCBI Taxonomy" id="10116"/>
    <lineage>
        <taxon>Eukaryota</taxon>
        <taxon>Metazoa</taxon>
        <taxon>Chordata</taxon>
        <taxon>Craniata</taxon>
        <taxon>Vertebrata</taxon>
        <taxon>Euteleostomi</taxon>
        <taxon>Mammalia</taxon>
        <taxon>Eutheria</taxon>
        <taxon>Euarchontoglires</taxon>
        <taxon>Glires</taxon>
        <taxon>Rodentia</taxon>
        <taxon>Myomorpha</taxon>
        <taxon>Muroidea</taxon>
        <taxon>Muridae</taxon>
        <taxon>Murinae</taxon>
        <taxon>Rattus</taxon>
    </lineage>
</organism>
<reference key="1">
    <citation type="journal article" date="1989" name="J. Biol. Chem.">
        <title>Molecular cloning of a third isoform of the calmodulin-sensitive plasma membrane Ca2+-transporting ATPase that is expressed predominantly in brain and skeletal muscle.</title>
        <authorList>
            <person name="Greeb J."/>
            <person name="Shull G.E."/>
        </authorList>
    </citation>
    <scope>NUCLEOTIDE SEQUENCE [MRNA] (ISOFORM ZA)</scope>
    <scope>TISSUE SPECIFICITY</scope>
    <source>
        <tissue>Brain</tissue>
    </source>
</reference>
<reference key="2">
    <citation type="journal article" date="1992" name="J. Biol. Chem.">
        <title>Structure of the rat plasma membrane Ca(2+)-ATPase isoform 3 gene and characterization of alternative splicing and transcription products. Skeletal muscle-specific splicing results in a plasma membrane Ca(2+)-ATPase with a novel calmodulin-binding domain.</title>
        <authorList>
            <person name="Burk S.E."/>
            <person name="Shull G.E."/>
        </authorList>
    </citation>
    <scope>NUCLEOTIDE SEQUENCE [MRNA] OF 1016-1258 (ISOFORMS XF/ZF)</scope>
    <scope>ALTERNATIVE SPLICING</scope>
    <source>
        <strain>CD Charles River</strain>
    </source>
</reference>
<reference key="3">
    <citation type="journal article" date="1993" name="J. Biol. Chem.">
        <title>Alternative splicing of exons encoding the calmodulin-binding domains and C termini of plasma membrane Ca(2+)-ATPase isoforms 1, 2, 3, and 4.</title>
        <authorList>
            <person name="Keeton T.P."/>
            <person name="Burk S.E."/>
            <person name="Shull G.E."/>
        </authorList>
    </citation>
    <scope>NUCLEOTIDE SEQUENCE [GENOMIC DNA] OF 1054-1258</scope>
    <scope>ALTERNATIVE SPLICING (ISOFORMS XA/ZA)</scope>
    <scope>TISSUE SPECIFICITY (ISOFORMS XA AND XB)</scope>
    <source>
        <strain>CD Charles River</strain>
    </source>
</reference>
<reference key="4">
    <citation type="journal article" date="1999" name="J. Biol. Chem.">
        <title>The expression of plasma membrane Ca2+ pump isoforms in cerebellar granule neurons is modulated by Ca2+.</title>
        <authorList>
            <person name="Guerini D."/>
            <person name="Garcia-Martin E."/>
            <person name="Gerber A."/>
            <person name="Volbracht C."/>
            <person name="Leist M."/>
            <person name="Merino C.G."/>
            <person name="Carafoli E."/>
        </authorList>
    </citation>
    <scope>FUNCTION</scope>
    <scope>CATALYTIC ACTIVITY</scope>
    <scope>TISSUE SPECIFICITY</scope>
    <scope>INDUCTION</scope>
</reference>
<reference key="5">
    <citation type="journal article" date="2007" name="J. Comp. Neurol.">
        <title>Perisynaptic organization of plasma membrane calcium pumps in cerebellar cortex.</title>
        <authorList>
            <person name="Burette A."/>
            <person name="Weinberg R.J."/>
        </authorList>
    </citation>
    <scope>SUBCELLULAR LOCATION</scope>
    <scope>TISSUE SPECIFICITY</scope>
</reference>
<reference key="6">
    <citation type="journal article" date="2012" name="Nat. Commun.">
        <title>Quantitative maps of protein phosphorylation sites across 14 different rat organs and tissues.</title>
        <authorList>
            <person name="Lundby A."/>
            <person name="Secher A."/>
            <person name="Lage K."/>
            <person name="Nordsborg N.B."/>
            <person name="Dmytriyev A."/>
            <person name="Lundby C."/>
            <person name="Olsen J.V."/>
        </authorList>
    </citation>
    <scope>PHOSPHORYLATION [LARGE SCALE ANALYSIS] AT SER-8; THR-1079 AND SER-1126</scope>
    <scope>IDENTIFICATION BY MASS SPECTROMETRY [LARGE SCALE ANALYSIS]</scope>
</reference>
<reference key="7">
    <citation type="journal article" date="2014" name="PLoS ONE">
        <title>Plasma membrane Ca2+-ATPase isoforms composition regulates cellular pH homeostasis in differentiating PC12 cells in a manner dependent on cytosolic Ca2+ elevations.</title>
        <authorList>
            <person name="Boczek T."/>
            <person name="Lisek M."/>
            <person name="Ferenc B."/>
            <person name="Kowalski A."/>
            <person name="Stepinski D."/>
            <person name="Wiktorska M."/>
            <person name="Zylinska L."/>
        </authorList>
    </citation>
    <scope>FUNCTION</scope>
    <scope>CATALYTIC ACTIVITY</scope>
</reference>
<reference key="8">
    <citation type="journal article" date="2016" name="Endocrinology">
        <title>Cellular Pathophysiology of an Adrenal Adenoma-Associated Mutant of the Plasma Membrane Ca(2+)-ATPase ATP2B3.</title>
        <authorList>
            <person name="Tauber P."/>
            <person name="Aichinger B."/>
            <person name="Christ C."/>
            <person name="Stindl J."/>
            <person name="Rhayem Y."/>
            <person name="Beuschlein F."/>
            <person name="Warth R."/>
            <person name="Bandulik S."/>
        </authorList>
    </citation>
    <scope>SUBCELLULAR LOCATION</scope>
    <scope>TISSUE SPECIFICITY</scope>
</reference>
<evidence type="ECO:0000250" key="1"/>
<evidence type="ECO:0000250" key="2">
    <source>
        <dbReference type="UniProtKB" id="Q16720"/>
    </source>
</evidence>
<evidence type="ECO:0000255" key="3"/>
<evidence type="ECO:0000256" key="4">
    <source>
        <dbReference type="SAM" id="MobiDB-lite"/>
    </source>
</evidence>
<evidence type="ECO:0000269" key="5">
    <source>
    </source>
</evidence>
<evidence type="ECO:0000269" key="6">
    <source>
    </source>
</evidence>
<evidence type="ECO:0000269" key="7">
    <source>
    </source>
</evidence>
<evidence type="ECO:0000269" key="8">
    <source>
    </source>
</evidence>
<evidence type="ECO:0000269" key="9">
    <source>
    </source>
</evidence>
<evidence type="ECO:0000269" key="10">
    <source>
    </source>
</evidence>
<evidence type="ECO:0000303" key="11">
    <source>
    </source>
</evidence>
<evidence type="ECO:0000305" key="12"/>
<evidence type="ECO:0000305" key="13">
    <source>
    </source>
</evidence>
<evidence type="ECO:0000305" key="14">
    <source>
    </source>
</evidence>
<evidence type="ECO:0007744" key="15">
    <source>
    </source>
</evidence>
<proteinExistence type="evidence at protein level"/>
<accession>Q64568</accession>
<accession>Q01489</accession>
<accession>Q63444</accession>
<comment type="function">
    <text evidence="6 10">ATP-driven Ca(2+) ion pump involved in the maintenance of basal intracellular Ca(2+) levels at the presynaptic terminals. Uses ATP as an energy source to transport cytosolic Ca(2+) ions across the plasma membrane to the extracellular compartment (PubMed:25014339, PubMed:9880546). May counter-transport protons, but the mechanism and the stoichiometry of this Ca(2+)/H(+) exchange remains to be established (PubMed:25014339, PubMed:9880546).</text>
</comment>
<comment type="catalytic activity">
    <reaction evidence="13 14">
        <text>Ca(2+)(in) + ATP + H2O = Ca(2+)(out) + ADP + phosphate + H(+)</text>
        <dbReference type="Rhea" id="RHEA:18105"/>
        <dbReference type="ChEBI" id="CHEBI:15377"/>
        <dbReference type="ChEBI" id="CHEBI:15378"/>
        <dbReference type="ChEBI" id="CHEBI:29108"/>
        <dbReference type="ChEBI" id="CHEBI:30616"/>
        <dbReference type="ChEBI" id="CHEBI:43474"/>
        <dbReference type="ChEBI" id="CHEBI:456216"/>
        <dbReference type="EC" id="7.2.2.10"/>
    </reaction>
    <physiologicalReaction direction="left-to-right" evidence="13 14">
        <dbReference type="Rhea" id="RHEA:18106"/>
    </physiologicalReaction>
</comment>
<comment type="subunit">
    <text evidence="2">Interacts with PDZD11. Interacts (via N-terminus) with YWHAE.</text>
</comment>
<comment type="subcellular location">
    <subcellularLocation>
        <location evidence="8">Cell membrane</location>
        <topology evidence="3">Multi-pass membrane protein</topology>
    </subcellularLocation>
    <subcellularLocation>
        <location evidence="5">Presynaptic cell membrane</location>
        <topology evidence="3">Multi-pass membrane protein</topology>
    </subcellularLocation>
    <text evidence="5">Localized at parallel fiber terminals.</text>
</comment>
<comment type="alternative products">
    <event type="alternative splicing"/>
    <isoform>
        <id>Q64568-1</id>
        <name>XD</name>
        <name>AIICIV</name>
        <sequence type="displayed"/>
    </isoform>
    <isoform>
        <id>Q64568-2</id>
        <name>XA</name>
        <name>AIICII</name>
        <sequence type="described" ref="VSP_000400"/>
    </isoform>
    <isoform>
        <id>Q64568-3</id>
        <name>ZA</name>
        <name>AICII</name>
        <sequence type="described" ref="VSP_000396 VSP_000400"/>
    </isoform>
    <isoform>
        <id>Q64568-4</id>
        <name>XB</name>
        <name>AIICI</name>
        <sequence type="described" ref="VSP_000397"/>
    </isoform>
    <isoform>
        <id>Q64568-5</id>
        <name>ZB</name>
        <name>AICI</name>
        <sequence type="described" ref="VSP_000396 VSP_000397"/>
    </isoform>
    <isoform>
        <id>Q64568-6</id>
        <name>XC</name>
        <name>AIICIII</name>
        <sequence type="described" ref="VSP_000399"/>
    </isoform>
    <isoform>
        <id>Q64568-7</id>
        <name>ZC</name>
        <name>AICIII</name>
        <sequence type="described" ref="VSP_000396 VSP_000399"/>
    </isoform>
    <isoform>
        <id>Q64568-8</id>
        <name>ZD</name>
        <name>AICIV</name>
        <sequence type="described" ref="VSP_000396"/>
    </isoform>
    <isoform>
        <id>Q64568-9</id>
        <name>XE</name>
        <name>AIICV</name>
        <sequence type="described" ref="VSP_000401"/>
    </isoform>
    <isoform>
        <id>Q64568-10</id>
        <name>ZE</name>
        <name>AICV</name>
        <sequence type="described" ref="VSP_000396 VSP_000401"/>
    </isoform>
    <isoform>
        <id>Q64568-11</id>
        <name>XF</name>
        <name>AIICVI</name>
        <sequence type="described" ref="VSP_000398"/>
    </isoform>
    <isoform>
        <id>Q64568-12</id>
        <name>ZF</name>
        <name>AICVI</name>
        <sequence type="described" ref="VSP_000396 VSP_000398"/>
    </isoform>
    <text>There is a combination of two alternative spliced domains at N-terminal site A (X and Z) and at C-terminal site C (A, B, C, D, E and F). So far the splice sites have been studied independently. Experimental confirmation may be lacking for some isoforms.</text>
</comment>
<comment type="tissue specificity">
    <text evidence="5 7 8 10">Expressed predominantly in brain and skeletal muscle (PubMed:2530223). Expressed in the molecular layer of the cerebellar cortex, in particular in granule cells (at protein level) (PubMed:17183553, PubMed:27035656, PubMed:9880546). Expressed in aldosterone producing glomerulosa cells of adrenal glands (at protein level) (PubMed:27035656). Detected at low levels in various tissues including testis, stomach, small intestine, and large intestine (PubMed:2530223).</text>
</comment>
<comment type="tissue specificity">
    <molecule>Isoform XA</molecule>
    <text evidence="9">Most abundant form in brain and most other tissues.</text>
</comment>
<comment type="tissue specificity">
    <molecule>Isoform XB</molecule>
    <text evidence="9">Most abundant form in skeletal muscle and is also found in brain and at low levels in testis and kidney.</text>
</comment>
<comment type="induction">
    <text evidence="10">Up-regulated upon activation of glutamate-operated calcium channels.</text>
</comment>
<comment type="similarity">
    <text evidence="12">Belongs to the cation transport ATPase (P-type) (TC 3.A.3) family. Type IIB subfamily.</text>
</comment>
<name>AT2B3_RAT</name>